<protein>
    <recommendedName>
        <fullName evidence="1">Ribosome biogenesis protein Nop10</fullName>
    </recommendedName>
</protein>
<proteinExistence type="inferred from homology"/>
<name>NOP10_METBF</name>
<feature type="chain" id="PRO_1000148551" description="Ribosome biogenesis protein Nop10">
    <location>
        <begin position="1"/>
        <end position="51"/>
    </location>
</feature>
<gene>
    <name evidence="1" type="primary">nop10</name>
    <name type="ordered locus">Mbar_A1566</name>
</gene>
<accession>Q46C79</accession>
<evidence type="ECO:0000255" key="1">
    <source>
        <dbReference type="HAMAP-Rule" id="MF_00803"/>
    </source>
</evidence>
<sequence length="51" mass="5849">MGQKIRKCKNCGRYTLREICPVCGGKPFSPNPARFSPKDPYGRYRRMAKKG</sequence>
<keyword id="KW-0687">Ribonucleoprotein</keyword>
<keyword id="KW-0690">Ribosome biogenesis</keyword>
<keyword id="KW-0698">rRNA processing</keyword>
<organism>
    <name type="scientific">Methanosarcina barkeri (strain Fusaro / DSM 804)</name>
    <dbReference type="NCBI Taxonomy" id="269797"/>
    <lineage>
        <taxon>Archaea</taxon>
        <taxon>Methanobacteriati</taxon>
        <taxon>Methanobacteriota</taxon>
        <taxon>Stenosarchaea group</taxon>
        <taxon>Methanomicrobia</taxon>
        <taxon>Methanosarcinales</taxon>
        <taxon>Methanosarcinaceae</taxon>
        <taxon>Methanosarcina</taxon>
    </lineage>
</organism>
<reference key="1">
    <citation type="journal article" date="2006" name="J. Bacteriol.">
        <title>The Methanosarcina barkeri genome: comparative analysis with Methanosarcina acetivorans and Methanosarcina mazei reveals extensive rearrangement within methanosarcinal genomes.</title>
        <authorList>
            <person name="Maeder D.L."/>
            <person name="Anderson I."/>
            <person name="Brettin T.S."/>
            <person name="Bruce D.C."/>
            <person name="Gilna P."/>
            <person name="Han C.S."/>
            <person name="Lapidus A."/>
            <person name="Metcalf W.W."/>
            <person name="Saunders E."/>
            <person name="Tapia R."/>
            <person name="Sowers K.R."/>
        </authorList>
    </citation>
    <scope>NUCLEOTIDE SEQUENCE [LARGE SCALE GENOMIC DNA]</scope>
    <source>
        <strain>Fusaro / DSM 804</strain>
    </source>
</reference>
<comment type="function">
    <text evidence="1">Involved in ribosome biogenesis; more specifically in 18S rRNA pseudouridylation and in cleavage of pre-rRNA.</text>
</comment>
<comment type="similarity">
    <text evidence="1">Belongs to the NOP10 family.</text>
</comment>
<dbReference type="EMBL" id="CP000099">
    <property type="protein sequence ID" value="AAZ70513.1"/>
    <property type="molecule type" value="Genomic_DNA"/>
</dbReference>
<dbReference type="SMR" id="Q46C79"/>
<dbReference type="STRING" id="269797.Mbar_A1566"/>
<dbReference type="PaxDb" id="269797-Mbar_A1566"/>
<dbReference type="KEGG" id="mba:Mbar_A1566"/>
<dbReference type="eggNOG" id="arCOG00906">
    <property type="taxonomic scope" value="Archaea"/>
</dbReference>
<dbReference type="HOGENOM" id="CLU_196480_1_0_2"/>
<dbReference type="OrthoDB" id="7259at2157"/>
<dbReference type="GO" id="GO:1990904">
    <property type="term" value="C:ribonucleoprotein complex"/>
    <property type="evidence" value="ECO:0007669"/>
    <property type="project" value="UniProtKB-KW"/>
</dbReference>
<dbReference type="GO" id="GO:0030515">
    <property type="term" value="F:snoRNA binding"/>
    <property type="evidence" value="ECO:0007669"/>
    <property type="project" value="InterPro"/>
</dbReference>
<dbReference type="GO" id="GO:0001522">
    <property type="term" value="P:pseudouridine synthesis"/>
    <property type="evidence" value="ECO:0007669"/>
    <property type="project" value="InterPro"/>
</dbReference>
<dbReference type="GO" id="GO:0006364">
    <property type="term" value="P:rRNA processing"/>
    <property type="evidence" value="ECO:0007669"/>
    <property type="project" value="UniProtKB-UniRule"/>
</dbReference>
<dbReference type="Gene3D" id="2.20.28.40">
    <property type="entry name" value="H/ACA ribonucleoprotein complex, subunit Nop10"/>
    <property type="match status" value="1"/>
</dbReference>
<dbReference type="HAMAP" id="MF_00803">
    <property type="entry name" value="Nop10"/>
    <property type="match status" value="1"/>
</dbReference>
<dbReference type="InterPro" id="IPR007264">
    <property type="entry name" value="H/ACA_rnp_Nop10"/>
</dbReference>
<dbReference type="InterPro" id="IPR036756">
    <property type="entry name" value="H/ACA_rnp_Nop10_sf"/>
</dbReference>
<dbReference type="InterPro" id="IPR023532">
    <property type="entry name" value="Nop10_arc-typ"/>
</dbReference>
<dbReference type="NCBIfam" id="NF009623">
    <property type="entry name" value="PRK13130.1"/>
    <property type="match status" value="1"/>
</dbReference>
<dbReference type="PANTHER" id="PTHR13305:SF0">
    <property type="entry name" value="H_ACA RIBONUCLEOPROTEIN COMPLEX SUBUNIT 3"/>
    <property type="match status" value="1"/>
</dbReference>
<dbReference type="PANTHER" id="PTHR13305">
    <property type="entry name" value="RIBOSOME BIOGENESIS PROTEIN NOP10"/>
    <property type="match status" value="1"/>
</dbReference>
<dbReference type="Pfam" id="PF04135">
    <property type="entry name" value="Nop10p"/>
    <property type="match status" value="1"/>
</dbReference>
<dbReference type="SUPFAM" id="SSF144210">
    <property type="entry name" value="Nop10-like SnoRNP"/>
    <property type="match status" value="1"/>
</dbReference>